<evidence type="ECO:0000255" key="1">
    <source>
        <dbReference type="HAMAP-Rule" id="MF_01037"/>
    </source>
</evidence>
<dbReference type="EC" id="2.1.1.74" evidence="1"/>
<dbReference type="EMBL" id="CP000936">
    <property type="protein sequence ID" value="ACA36820.1"/>
    <property type="molecule type" value="Genomic_DNA"/>
</dbReference>
<dbReference type="RefSeq" id="WP_000083698.1">
    <property type="nucleotide sequence ID" value="NC_010380.1"/>
</dbReference>
<dbReference type="SMR" id="B1IBA6"/>
<dbReference type="KEGG" id="spv:SPH_1047"/>
<dbReference type="HOGENOM" id="CLU_033057_1_0_9"/>
<dbReference type="Proteomes" id="UP000002163">
    <property type="component" value="Chromosome"/>
</dbReference>
<dbReference type="GO" id="GO:0005829">
    <property type="term" value="C:cytosol"/>
    <property type="evidence" value="ECO:0007669"/>
    <property type="project" value="TreeGrafter"/>
</dbReference>
<dbReference type="GO" id="GO:0050660">
    <property type="term" value="F:flavin adenine dinucleotide binding"/>
    <property type="evidence" value="ECO:0007669"/>
    <property type="project" value="UniProtKB-UniRule"/>
</dbReference>
<dbReference type="GO" id="GO:0047151">
    <property type="term" value="F:tRNA (uracil(54)-C5)-methyltransferase activity, 5,10-methylenetetrahydrofolate-dependent"/>
    <property type="evidence" value="ECO:0007669"/>
    <property type="project" value="UniProtKB-UniRule"/>
</dbReference>
<dbReference type="GO" id="GO:0030488">
    <property type="term" value="P:tRNA methylation"/>
    <property type="evidence" value="ECO:0007669"/>
    <property type="project" value="TreeGrafter"/>
</dbReference>
<dbReference type="GO" id="GO:0002098">
    <property type="term" value="P:tRNA wobble uridine modification"/>
    <property type="evidence" value="ECO:0007669"/>
    <property type="project" value="TreeGrafter"/>
</dbReference>
<dbReference type="FunFam" id="3.50.50.60:FF:000035">
    <property type="entry name" value="Methylenetetrahydrofolate--tRNA-(uracil-5-)-methyltransferase TrmFO"/>
    <property type="match status" value="1"/>
</dbReference>
<dbReference type="FunFam" id="3.50.50.60:FF:000040">
    <property type="entry name" value="Methylenetetrahydrofolate--tRNA-(uracil-5-)-methyltransferase TrmFO"/>
    <property type="match status" value="1"/>
</dbReference>
<dbReference type="Gene3D" id="3.50.50.60">
    <property type="entry name" value="FAD/NAD(P)-binding domain"/>
    <property type="match status" value="2"/>
</dbReference>
<dbReference type="HAMAP" id="MF_01037">
    <property type="entry name" value="TrmFO"/>
    <property type="match status" value="1"/>
</dbReference>
<dbReference type="InterPro" id="IPR036188">
    <property type="entry name" value="FAD/NAD-bd_sf"/>
</dbReference>
<dbReference type="InterPro" id="IPR002218">
    <property type="entry name" value="MnmG-rel"/>
</dbReference>
<dbReference type="InterPro" id="IPR020595">
    <property type="entry name" value="MnmG-rel_CS"/>
</dbReference>
<dbReference type="InterPro" id="IPR040131">
    <property type="entry name" value="MnmG_N"/>
</dbReference>
<dbReference type="InterPro" id="IPR004417">
    <property type="entry name" value="TrmFO"/>
</dbReference>
<dbReference type="NCBIfam" id="TIGR00137">
    <property type="entry name" value="gid_trmFO"/>
    <property type="match status" value="1"/>
</dbReference>
<dbReference type="NCBIfam" id="NF003739">
    <property type="entry name" value="PRK05335.1"/>
    <property type="match status" value="1"/>
</dbReference>
<dbReference type="PANTHER" id="PTHR11806">
    <property type="entry name" value="GLUCOSE INHIBITED DIVISION PROTEIN A"/>
    <property type="match status" value="1"/>
</dbReference>
<dbReference type="PANTHER" id="PTHR11806:SF2">
    <property type="entry name" value="METHYLENETETRAHYDROFOLATE--TRNA-(URACIL-5-)-METHYLTRANSFERASE TRMFO"/>
    <property type="match status" value="1"/>
</dbReference>
<dbReference type="Pfam" id="PF01134">
    <property type="entry name" value="GIDA"/>
    <property type="match status" value="1"/>
</dbReference>
<dbReference type="SUPFAM" id="SSF51905">
    <property type="entry name" value="FAD/NAD(P)-binding domain"/>
    <property type="match status" value="1"/>
</dbReference>
<dbReference type="PROSITE" id="PS01281">
    <property type="entry name" value="GIDA_2"/>
    <property type="match status" value="1"/>
</dbReference>
<keyword id="KW-0963">Cytoplasm</keyword>
<keyword id="KW-0274">FAD</keyword>
<keyword id="KW-0285">Flavoprotein</keyword>
<keyword id="KW-0489">Methyltransferase</keyword>
<keyword id="KW-0520">NAD</keyword>
<keyword id="KW-0521">NADP</keyword>
<keyword id="KW-0808">Transferase</keyword>
<keyword id="KW-0819">tRNA processing</keyword>
<comment type="function">
    <text evidence="1">Catalyzes the folate-dependent formation of 5-methyl-uridine at position 54 (M-5-U54) in all tRNAs.</text>
</comment>
<comment type="catalytic activity">
    <reaction evidence="1">
        <text>uridine(54) in tRNA + (6R)-5,10-methylene-5,6,7,8-tetrahydrofolate + NADH + H(+) = 5-methyluridine(54) in tRNA + (6S)-5,6,7,8-tetrahydrofolate + NAD(+)</text>
        <dbReference type="Rhea" id="RHEA:16873"/>
        <dbReference type="Rhea" id="RHEA-COMP:10167"/>
        <dbReference type="Rhea" id="RHEA-COMP:10193"/>
        <dbReference type="ChEBI" id="CHEBI:15378"/>
        <dbReference type="ChEBI" id="CHEBI:15636"/>
        <dbReference type="ChEBI" id="CHEBI:57453"/>
        <dbReference type="ChEBI" id="CHEBI:57540"/>
        <dbReference type="ChEBI" id="CHEBI:57945"/>
        <dbReference type="ChEBI" id="CHEBI:65315"/>
        <dbReference type="ChEBI" id="CHEBI:74447"/>
        <dbReference type="EC" id="2.1.1.74"/>
    </reaction>
</comment>
<comment type="catalytic activity">
    <reaction evidence="1">
        <text>uridine(54) in tRNA + (6R)-5,10-methylene-5,6,7,8-tetrahydrofolate + NADPH + H(+) = 5-methyluridine(54) in tRNA + (6S)-5,6,7,8-tetrahydrofolate + NADP(+)</text>
        <dbReference type="Rhea" id="RHEA:62372"/>
        <dbReference type="Rhea" id="RHEA-COMP:10167"/>
        <dbReference type="Rhea" id="RHEA-COMP:10193"/>
        <dbReference type="ChEBI" id="CHEBI:15378"/>
        <dbReference type="ChEBI" id="CHEBI:15636"/>
        <dbReference type="ChEBI" id="CHEBI:57453"/>
        <dbReference type="ChEBI" id="CHEBI:57783"/>
        <dbReference type="ChEBI" id="CHEBI:58349"/>
        <dbReference type="ChEBI" id="CHEBI:65315"/>
        <dbReference type="ChEBI" id="CHEBI:74447"/>
        <dbReference type="EC" id="2.1.1.74"/>
    </reaction>
</comment>
<comment type="cofactor">
    <cofactor evidence="1">
        <name>FAD</name>
        <dbReference type="ChEBI" id="CHEBI:57692"/>
    </cofactor>
</comment>
<comment type="subcellular location">
    <subcellularLocation>
        <location evidence="1">Cytoplasm</location>
    </subcellularLocation>
</comment>
<comment type="similarity">
    <text evidence="1">Belongs to the MnmG family. TrmFO subfamily.</text>
</comment>
<accession>B1IBA6</accession>
<protein>
    <recommendedName>
        <fullName evidence="1">Methylenetetrahydrofolate--tRNA-(uracil-5-)-methyltransferase TrmFO</fullName>
        <ecNumber evidence="1">2.1.1.74</ecNumber>
    </recommendedName>
    <alternativeName>
        <fullName evidence="1">Folate-dependent tRNA (uracil-5-)-methyltransferase</fullName>
    </alternativeName>
    <alternativeName>
        <fullName evidence="1">Folate-dependent tRNA(M-5-U54)-methyltransferase</fullName>
    </alternativeName>
</protein>
<gene>
    <name evidence="1" type="primary">trmFO</name>
    <name type="ordered locus">SPH_1047</name>
</gene>
<sequence>MSQSYINVIGAGLAGSEAAYQIAERGIPVKLYEMRGVKSTPQHKTDNFAELVCSNSLRGDALTNAVGLLKEEMRRLGSVILESAEATRVPAGGALAVDRDGFSQMVTEKVANHPLIEVVRDEITELPTDVITVIATGPLTSDALAEKIHALNDGDGFYFYDAAAPIIDVNTIDMSKVYLKSRYDKGEAAYLNAPMTKQEFMDFHEALVNAEEAPLNSFEKEKYFEGCMPIEVMAKRGIKTMLYGPMKPVGLEYPDDYTGPRDGEFKTPYAVVQLRQDNAAGSLYNIVGFQTHLKWGEQKRVFQMIPGLENAEFVRYGVMHRNSYMDSPNLLEQTYRSKKQPNLFFAGQMTGVEGYVESAASGLVAGINAARLFKEESEVIFPETTAIGSLAHYITHADSKHFQPMNVNFGIIKELEGERIRDKKARYEKIAERALADLEEFLTV</sequence>
<feature type="chain" id="PRO_0000346398" description="Methylenetetrahydrofolate--tRNA-(uracil-5-)-methyltransferase TrmFO">
    <location>
        <begin position="1"/>
        <end position="444"/>
    </location>
</feature>
<feature type="binding site" evidence="1">
    <location>
        <begin position="10"/>
        <end position="15"/>
    </location>
    <ligand>
        <name>FAD</name>
        <dbReference type="ChEBI" id="CHEBI:57692"/>
    </ligand>
</feature>
<proteinExistence type="inferred from homology"/>
<name>TRMFO_STRPI</name>
<reference key="1">
    <citation type="journal article" date="2010" name="Genome Biol.">
        <title>Structure and dynamics of the pan-genome of Streptococcus pneumoniae and closely related species.</title>
        <authorList>
            <person name="Donati C."/>
            <person name="Hiller N.L."/>
            <person name="Tettelin H."/>
            <person name="Muzzi A."/>
            <person name="Croucher N.J."/>
            <person name="Angiuoli S.V."/>
            <person name="Oggioni M."/>
            <person name="Dunning Hotopp J.C."/>
            <person name="Hu F.Z."/>
            <person name="Riley D.R."/>
            <person name="Covacci A."/>
            <person name="Mitchell T.J."/>
            <person name="Bentley S.D."/>
            <person name="Kilian M."/>
            <person name="Ehrlich G.D."/>
            <person name="Rappuoli R."/>
            <person name="Moxon E.R."/>
            <person name="Masignani V."/>
        </authorList>
    </citation>
    <scope>NUCLEOTIDE SEQUENCE [LARGE SCALE GENOMIC DNA]</scope>
    <source>
        <strain>Hungary19A-6</strain>
    </source>
</reference>
<organism>
    <name type="scientific">Streptococcus pneumoniae (strain Hungary19A-6)</name>
    <dbReference type="NCBI Taxonomy" id="487214"/>
    <lineage>
        <taxon>Bacteria</taxon>
        <taxon>Bacillati</taxon>
        <taxon>Bacillota</taxon>
        <taxon>Bacilli</taxon>
        <taxon>Lactobacillales</taxon>
        <taxon>Streptococcaceae</taxon>
        <taxon>Streptococcus</taxon>
    </lineage>
</organism>